<accession>Q8IS16</accession>
<accession>Q550U8</accession>
<proteinExistence type="evidence at protein level"/>
<protein>
    <recommendedName>
        <fullName>Ras guanine nucleotide exchange factor H</fullName>
    </recommendedName>
    <alternativeName>
        <fullName>RasGEF domain-containing protein H</fullName>
    </alternativeName>
</protein>
<sequence>MSNTNINVQSSTPKKSLGSSQYSLAGSSSSNLNNINNNNNNNNNNNNNSTGQENSIDDSGSSSFVNFPASEWLSKAMHKHPDILELRERTRPITQVKSYSRNKRSSKTEASHSINDTMLLKLIMQYFHEENLTTSLKKIQEETKVQFTPNEVDKDSLENLLRIGIKDTNWFGPLEDIEDADPEVETYHSYISEDSLNENGLEGEGNLIEDRYDESQISRNPDGTIKAATFNRLLLWLIGNFNGPDVNEFKKIFFLTYPSFTTAEAILNKFTQIYQLFDNIESAQVICFIRFWIEQHPTDFNEKLLAILNNFIEHQVAASHAKQLRAVINLKIENYKEARKEIKDPPEPKVPKNIFSPTLTFDDIDEEEIARQLCCIDFALYELIKPSEFLIKGWTKPQYRNKAVNLLNMMRRFNDFTKWIAASILNEQNSKGRSKLLGRFLKISEHLRANNNFHSLMAIYGGINNTHVFRTKAIRKDLSRQQQETYAELEKLFASENSFRNYRIAYKDAKPPCIPFLGIHLRDLAFVDESNPDRINNLLNLNKRRVIWRVIVNTMRYQPIPYYFLKVHQISLFLTELKTESEQPQLTLDLSSHDTVLPSSPSSK</sequence>
<dbReference type="EMBL" id="AY160097">
    <property type="protein sequence ID" value="AAN46877.1"/>
    <property type="molecule type" value="Genomic_DNA"/>
</dbReference>
<dbReference type="EMBL" id="AAFI02000019">
    <property type="protein sequence ID" value="EAL68983.1"/>
    <property type="molecule type" value="Genomic_DNA"/>
</dbReference>
<dbReference type="RefSeq" id="XP_642834.1">
    <property type="nucleotide sequence ID" value="XM_637742.1"/>
</dbReference>
<dbReference type="SMR" id="Q8IS16"/>
<dbReference type="FunCoup" id="Q8IS16">
    <property type="interactions" value="11"/>
</dbReference>
<dbReference type="STRING" id="44689.Q8IS16"/>
<dbReference type="PaxDb" id="44689-DDB0185196"/>
<dbReference type="EnsemblProtists" id="EAL68983">
    <property type="protein sequence ID" value="EAL68983"/>
    <property type="gene ID" value="DDB_G0276963"/>
</dbReference>
<dbReference type="GeneID" id="8620698"/>
<dbReference type="KEGG" id="ddi:DDB_G0276963"/>
<dbReference type="dictyBase" id="DDB_G0276963">
    <property type="gene designation" value="gefH"/>
</dbReference>
<dbReference type="VEuPathDB" id="AmoebaDB:DDB_G0276963"/>
<dbReference type="eggNOG" id="KOG3417">
    <property type="taxonomic scope" value="Eukaryota"/>
</dbReference>
<dbReference type="HOGENOM" id="CLU_452309_0_0_1"/>
<dbReference type="InParanoid" id="Q8IS16"/>
<dbReference type="OMA" id="FNDFTKW"/>
<dbReference type="PhylomeDB" id="Q8IS16"/>
<dbReference type="Reactome" id="R-DDI-193648">
    <property type="pathway name" value="NRAGE signals death through JNK"/>
</dbReference>
<dbReference type="Reactome" id="R-DDI-9013148">
    <property type="pathway name" value="CDC42 GTPase cycle"/>
</dbReference>
<dbReference type="Reactome" id="R-DDI-9013149">
    <property type="pathway name" value="RAC1 GTPase cycle"/>
</dbReference>
<dbReference type="PRO" id="PR:Q8IS16"/>
<dbReference type="Proteomes" id="UP000002195">
    <property type="component" value="Chromosome 2"/>
</dbReference>
<dbReference type="GO" id="GO:0005829">
    <property type="term" value="C:cytosol"/>
    <property type="evidence" value="ECO:0000315"/>
    <property type="project" value="dictyBase"/>
</dbReference>
<dbReference type="GO" id="GO:0005886">
    <property type="term" value="C:plasma membrane"/>
    <property type="evidence" value="ECO:0000315"/>
    <property type="project" value="dictyBase"/>
</dbReference>
<dbReference type="GO" id="GO:1905742">
    <property type="term" value="C:Ras guanyl-nucleotide exchange factor complex"/>
    <property type="evidence" value="ECO:0000314"/>
    <property type="project" value="dictyBase"/>
</dbReference>
<dbReference type="GO" id="GO:0005085">
    <property type="term" value="F:guanyl-nucleotide exchange factor activity"/>
    <property type="evidence" value="ECO:0000315"/>
    <property type="project" value="dictyBase"/>
</dbReference>
<dbReference type="GO" id="GO:0030295">
    <property type="term" value="F:protein kinase activator activity"/>
    <property type="evidence" value="ECO:0000314"/>
    <property type="project" value="dictyBase"/>
</dbReference>
<dbReference type="GO" id="GO:0031152">
    <property type="term" value="P:aggregation involved in sorocarp development"/>
    <property type="evidence" value="ECO:0000315"/>
    <property type="project" value="dictyBase"/>
</dbReference>
<dbReference type="GO" id="GO:0043327">
    <property type="term" value="P:chemotaxis to cAMP"/>
    <property type="evidence" value="ECO:0000315"/>
    <property type="project" value="dictyBase"/>
</dbReference>
<dbReference type="GO" id="GO:0046579">
    <property type="term" value="P:positive regulation of Ras protein signal transduction"/>
    <property type="evidence" value="ECO:0000315"/>
    <property type="project" value="dictyBase"/>
</dbReference>
<dbReference type="GO" id="GO:0007265">
    <property type="term" value="P:Ras protein signal transduction"/>
    <property type="evidence" value="ECO:0000318"/>
    <property type="project" value="GO_Central"/>
</dbReference>
<dbReference type="CDD" id="cd06224">
    <property type="entry name" value="REM"/>
    <property type="match status" value="1"/>
</dbReference>
<dbReference type="FunFam" id="1.10.840.10:FF:000009">
    <property type="entry name" value="rap guanine nucleotide exchange factor 1"/>
    <property type="match status" value="1"/>
</dbReference>
<dbReference type="Gene3D" id="1.10.840.10">
    <property type="entry name" value="Ras guanine-nucleotide exchange factors catalytic domain"/>
    <property type="match status" value="1"/>
</dbReference>
<dbReference type="Gene3D" id="1.20.870.10">
    <property type="entry name" value="Son of sevenless (SoS) protein Chain: S domain 1"/>
    <property type="match status" value="1"/>
</dbReference>
<dbReference type="InterPro" id="IPR006594">
    <property type="entry name" value="LisH"/>
</dbReference>
<dbReference type="InterPro" id="IPR008937">
    <property type="entry name" value="Ras-like_GEF"/>
</dbReference>
<dbReference type="InterPro" id="IPR000651">
    <property type="entry name" value="Ras-like_Gua-exchang_fac_N"/>
</dbReference>
<dbReference type="InterPro" id="IPR023578">
    <property type="entry name" value="Ras_GEF_dom_sf"/>
</dbReference>
<dbReference type="InterPro" id="IPR001895">
    <property type="entry name" value="RASGEF_cat_dom"/>
</dbReference>
<dbReference type="InterPro" id="IPR036964">
    <property type="entry name" value="RASGEF_cat_dom_sf"/>
</dbReference>
<dbReference type="PANTHER" id="PTHR23113">
    <property type="entry name" value="GUANINE NUCLEOTIDE EXCHANGE FACTOR"/>
    <property type="match status" value="1"/>
</dbReference>
<dbReference type="PANTHER" id="PTHR23113:SF203">
    <property type="entry name" value="RAS GUANINE NUCLEOTIDE EXCHANGE FACTOR H"/>
    <property type="match status" value="1"/>
</dbReference>
<dbReference type="Pfam" id="PF00617">
    <property type="entry name" value="RasGEF"/>
    <property type="match status" value="1"/>
</dbReference>
<dbReference type="Pfam" id="PF00618">
    <property type="entry name" value="RasGEF_N"/>
    <property type="match status" value="1"/>
</dbReference>
<dbReference type="SMART" id="SM00147">
    <property type="entry name" value="RasGEF"/>
    <property type="match status" value="1"/>
</dbReference>
<dbReference type="SMART" id="SM00229">
    <property type="entry name" value="RasGEFN"/>
    <property type="match status" value="1"/>
</dbReference>
<dbReference type="SUPFAM" id="SSF48366">
    <property type="entry name" value="Ras GEF"/>
    <property type="match status" value="1"/>
</dbReference>
<dbReference type="PROSITE" id="PS50896">
    <property type="entry name" value="LISH"/>
    <property type="match status" value="1"/>
</dbReference>
<dbReference type="PROSITE" id="PS50009">
    <property type="entry name" value="RASGEF_CAT"/>
    <property type="match status" value="1"/>
</dbReference>
<dbReference type="PROSITE" id="PS50212">
    <property type="entry name" value="RASGEF_NTER"/>
    <property type="match status" value="1"/>
</dbReference>
<gene>
    <name type="primary">gefH</name>
    <name type="synonym">rasGEFH</name>
    <name type="ORF">DDB_G0276963</name>
</gene>
<keyword id="KW-1003">Cell membrane</keyword>
<keyword id="KW-0344">Guanine-nucleotide releasing factor</keyword>
<keyword id="KW-0472">Membrane</keyword>
<keyword id="KW-1185">Reference proteome</keyword>
<organism>
    <name type="scientific">Dictyostelium discoideum</name>
    <name type="common">Social amoeba</name>
    <dbReference type="NCBI Taxonomy" id="44689"/>
    <lineage>
        <taxon>Eukaryota</taxon>
        <taxon>Amoebozoa</taxon>
        <taxon>Evosea</taxon>
        <taxon>Eumycetozoa</taxon>
        <taxon>Dictyostelia</taxon>
        <taxon>Dictyosteliales</taxon>
        <taxon>Dictyosteliaceae</taxon>
        <taxon>Dictyostelium</taxon>
    </lineage>
</organism>
<reference key="1">
    <citation type="journal article" date="2005" name="Genome Biol.">
        <title>The Dictyostelium genome encodes numerous RasGEFs with multiple biological roles.</title>
        <authorList>
            <person name="Wilkins A."/>
            <person name="Szafranski K."/>
            <person name="Fraser D.J."/>
            <person name="Bakthavatsalam D."/>
            <person name="Mueller R."/>
            <person name="Fisher P.R."/>
            <person name="Gloeckner G."/>
            <person name="Eichinger L."/>
            <person name="Noegel A.A."/>
            <person name="Insall R.H."/>
        </authorList>
    </citation>
    <scope>NUCLEOTIDE SEQUENCE [GENOMIC DNA]</scope>
    <scope>DEVELOPMENTAL STAGE</scope>
    <source>
        <strain>AX4</strain>
    </source>
</reference>
<reference key="2">
    <citation type="journal article" date="2002" name="Nature">
        <title>Sequence and analysis of chromosome 2 of Dictyostelium discoideum.</title>
        <authorList>
            <person name="Gloeckner G."/>
            <person name="Eichinger L."/>
            <person name="Szafranski K."/>
            <person name="Pachebat J.A."/>
            <person name="Bankier A.T."/>
            <person name="Dear P.H."/>
            <person name="Lehmann R."/>
            <person name="Baumgart C."/>
            <person name="Parra G."/>
            <person name="Abril J.F."/>
            <person name="Guigo R."/>
            <person name="Kumpf K."/>
            <person name="Tunggal B."/>
            <person name="Cox E.C."/>
            <person name="Quail M.A."/>
            <person name="Platzer M."/>
            <person name="Rosenthal A."/>
            <person name="Noegel A.A."/>
        </authorList>
    </citation>
    <scope>NUCLEOTIDE SEQUENCE [LARGE SCALE GENOMIC DNA]</scope>
    <source>
        <strain>AX4</strain>
    </source>
</reference>
<reference key="3">
    <citation type="journal article" date="2005" name="Nature">
        <title>The genome of the social amoeba Dictyostelium discoideum.</title>
        <authorList>
            <person name="Eichinger L."/>
            <person name="Pachebat J.A."/>
            <person name="Gloeckner G."/>
            <person name="Rajandream M.A."/>
            <person name="Sucgang R."/>
            <person name="Berriman M."/>
            <person name="Song J."/>
            <person name="Olsen R."/>
            <person name="Szafranski K."/>
            <person name="Xu Q."/>
            <person name="Tunggal B."/>
            <person name="Kummerfeld S."/>
            <person name="Madera M."/>
            <person name="Konfortov B.A."/>
            <person name="Rivero F."/>
            <person name="Bankier A.T."/>
            <person name="Lehmann R."/>
            <person name="Hamlin N."/>
            <person name="Davies R."/>
            <person name="Gaudet P."/>
            <person name="Fey P."/>
            <person name="Pilcher K."/>
            <person name="Chen G."/>
            <person name="Saunders D."/>
            <person name="Sodergren E.J."/>
            <person name="Davis P."/>
            <person name="Kerhornou A."/>
            <person name="Nie X."/>
            <person name="Hall N."/>
            <person name="Anjard C."/>
            <person name="Hemphill L."/>
            <person name="Bason N."/>
            <person name="Farbrother P."/>
            <person name="Desany B."/>
            <person name="Just E."/>
            <person name="Morio T."/>
            <person name="Rost R."/>
            <person name="Churcher C.M."/>
            <person name="Cooper J."/>
            <person name="Haydock S."/>
            <person name="van Driessche N."/>
            <person name="Cronin A."/>
            <person name="Goodhead I."/>
            <person name="Muzny D.M."/>
            <person name="Mourier T."/>
            <person name="Pain A."/>
            <person name="Lu M."/>
            <person name="Harper D."/>
            <person name="Lindsay R."/>
            <person name="Hauser H."/>
            <person name="James K.D."/>
            <person name="Quiles M."/>
            <person name="Madan Babu M."/>
            <person name="Saito T."/>
            <person name="Buchrieser C."/>
            <person name="Wardroper A."/>
            <person name="Felder M."/>
            <person name="Thangavelu M."/>
            <person name="Johnson D."/>
            <person name="Knights A."/>
            <person name="Loulseged H."/>
            <person name="Mungall K.L."/>
            <person name="Oliver K."/>
            <person name="Price C."/>
            <person name="Quail M.A."/>
            <person name="Urushihara H."/>
            <person name="Hernandez J."/>
            <person name="Rabbinowitsch E."/>
            <person name="Steffen D."/>
            <person name="Sanders M."/>
            <person name="Ma J."/>
            <person name="Kohara Y."/>
            <person name="Sharp S."/>
            <person name="Simmonds M.N."/>
            <person name="Spiegler S."/>
            <person name="Tivey A."/>
            <person name="Sugano S."/>
            <person name="White B."/>
            <person name="Walker D."/>
            <person name="Woodward J.R."/>
            <person name="Winckler T."/>
            <person name="Tanaka Y."/>
            <person name="Shaulsky G."/>
            <person name="Schleicher M."/>
            <person name="Weinstock G.M."/>
            <person name="Rosenthal A."/>
            <person name="Cox E.C."/>
            <person name="Chisholm R.L."/>
            <person name="Gibbs R.A."/>
            <person name="Loomis W.F."/>
            <person name="Platzer M."/>
            <person name="Kay R.R."/>
            <person name="Williams J.G."/>
            <person name="Dear P.H."/>
            <person name="Noegel A.A."/>
            <person name="Barrell B.G."/>
            <person name="Kuspa A."/>
        </authorList>
    </citation>
    <scope>NUCLEOTIDE SEQUENCE [LARGE SCALE GENOMIC DNA]</scope>
    <source>
        <strain>AX4</strain>
    </source>
</reference>
<reference key="4">
    <citation type="journal article" date="2010" name="Dev. Cell">
        <title>A Ras signaling complex controls the RasC-TORC2 pathway and directed cell migration.</title>
        <authorList>
            <person name="Charest P.G."/>
            <person name="Shen Z."/>
            <person name="Lakoduk A."/>
            <person name="Sasaki A.T."/>
            <person name="Briggs S.P."/>
            <person name="Firtel R.A."/>
        </authorList>
    </citation>
    <scope>IDENTIFICATION IN THE SCA1 COMPLEX</scope>
    <scope>INTERACTION WITH GEFA AND PHR</scope>
    <scope>FUNCTION</scope>
    <scope>DISRUPTION PHENOTYPE</scope>
</reference>
<evidence type="ECO:0000255" key="1">
    <source>
        <dbReference type="PROSITE-ProRule" id="PRU00126"/>
    </source>
</evidence>
<evidence type="ECO:0000255" key="2">
    <source>
        <dbReference type="PROSITE-ProRule" id="PRU00135"/>
    </source>
</evidence>
<evidence type="ECO:0000255" key="3">
    <source>
        <dbReference type="PROSITE-ProRule" id="PRU00168"/>
    </source>
</evidence>
<evidence type="ECO:0000256" key="4">
    <source>
        <dbReference type="SAM" id="MobiDB-lite"/>
    </source>
</evidence>
<evidence type="ECO:0000269" key="5">
    <source>
    </source>
</evidence>
<evidence type="ECO:0000269" key="6">
    <source>
    </source>
</evidence>
<feature type="chain" id="PRO_0000384466" description="Ras guanine nucleotide exchange factor H">
    <location>
        <begin position="1"/>
        <end position="604"/>
    </location>
</feature>
<feature type="domain" description="LisH" evidence="1">
    <location>
        <begin position="115"/>
        <end position="147"/>
    </location>
</feature>
<feature type="domain" description="N-terminal Ras-GEF" evidence="2">
    <location>
        <begin position="221"/>
        <end position="335"/>
    </location>
</feature>
<feature type="domain" description="Ras-GEF" evidence="3">
    <location>
        <begin position="365"/>
        <end position="591"/>
    </location>
</feature>
<feature type="region of interest" description="Disordered" evidence="4">
    <location>
        <begin position="1"/>
        <end position="61"/>
    </location>
</feature>
<feature type="compositionally biased region" description="Polar residues" evidence="4">
    <location>
        <begin position="1"/>
        <end position="26"/>
    </location>
</feature>
<feature type="compositionally biased region" description="Low complexity" evidence="4">
    <location>
        <begin position="27"/>
        <end position="49"/>
    </location>
</feature>
<feature type="compositionally biased region" description="Polar residues" evidence="4">
    <location>
        <begin position="50"/>
        <end position="61"/>
    </location>
</feature>
<comment type="function">
    <text evidence="6">Promotes the exchange of Ras-bound GDP by GTP (PubMed:20493808). Component of the Sca1 complex, a regulator of cell motility, chemotaxis and signal relay (PubMed:20493808). The Sca1 complex is recruited to the plasma membrane in a chemoattractant- and F-actin-dependent manner and is enriched at the leading edge of chemotaxing cells where it regulates F-actin dynamics and signal relay by controlling the activation of rasC and the downstream target of rapamycin complex 2 (TORC2)-Akt/protein kinase B (PKB) pathway (PubMed:20493808).</text>
</comment>
<comment type="subunit">
    <text evidence="6">Component of the Sca1 complex composed of at least gefA, gefH, scaA, phr, and the protein phosphatase 2A subunits pppA and pho2B (PubMed:20493808). Interacts directly with gefA and phr (PubMed:20493808).</text>
</comment>
<comment type="subcellular location">
    <subcellularLocation>
        <location evidence="6">Cell membrane</location>
    </subcellularLocation>
    <text evidence="6">The Sca1 complex is recruited to the plasma membrane in a chemoattractant- and F-actin-dependent manner and is enriched at the leading edge of chemotaxing cells (PubMed:20493808). Membrane localization of the Sca1 complex is regulated by scaA phosphorylation by PKB and PKB-related PKBR1 (PubMed:20493808).</text>
</comment>
<comment type="developmental stage">
    <text evidence="5">Expressed during development; especially from early development (PubMed:16086850).</text>
</comment>
<comment type="disruption phenotype">
    <text evidence="6">Display directionality defects during chemotaxis as well as defects in random motility (PubMed:20493808).</text>
</comment>
<name>GEFH_DICDI</name>